<gene>
    <name evidence="1" type="primary">cofC</name>
    <name type="ordered locus">Mlab_1358</name>
</gene>
<proteinExistence type="inferred from homology"/>
<feature type="chain" id="PRO_0000398749" description="2-phospho-L-lactate guanylyltransferase">
    <location>
        <begin position="1"/>
        <end position="212"/>
    </location>
</feature>
<evidence type="ECO:0000255" key="1">
    <source>
        <dbReference type="HAMAP-Rule" id="MF_02114"/>
    </source>
</evidence>
<comment type="function">
    <text evidence="1">Guanylyltransferase that catalyzes the activation of (2S)-2-phospholactate (2-PL) as (2S)-lactyl-2-diphospho-5'-guanosine, via the condensation of 2-PL with GTP. It is involved in the biosynthesis of coenzyme F420, a hydride carrier cofactor.</text>
</comment>
<comment type="catalytic activity">
    <reaction evidence="1">
        <text>(2S)-2-phospholactate + GTP + H(+) = (2S)-lactyl-2-diphospho-5'-guanosine + diphosphate</text>
        <dbReference type="Rhea" id="RHEA:63424"/>
        <dbReference type="ChEBI" id="CHEBI:15378"/>
        <dbReference type="ChEBI" id="CHEBI:33019"/>
        <dbReference type="ChEBI" id="CHEBI:37565"/>
        <dbReference type="ChEBI" id="CHEBI:59435"/>
        <dbReference type="ChEBI" id="CHEBI:59906"/>
        <dbReference type="EC" id="2.7.7.68"/>
    </reaction>
</comment>
<comment type="pathway">
    <text evidence="1">Cofactor biosynthesis; coenzyme F420 biosynthesis.</text>
</comment>
<comment type="subunit">
    <text evidence="1">Homodimer.</text>
</comment>
<comment type="similarity">
    <text evidence="1">Belongs to the CofC family.</text>
</comment>
<keyword id="KW-0342">GTP-binding</keyword>
<keyword id="KW-0547">Nucleotide-binding</keyword>
<keyword id="KW-0548">Nucleotidyltransferase</keyword>
<keyword id="KW-1185">Reference proteome</keyword>
<keyword id="KW-0808">Transferase</keyword>
<accession>A2ST69</accession>
<dbReference type="EC" id="2.7.7.68" evidence="1"/>
<dbReference type="EMBL" id="CP000559">
    <property type="protein sequence ID" value="ABN07525.1"/>
    <property type="molecule type" value="Genomic_DNA"/>
</dbReference>
<dbReference type="RefSeq" id="WP_011833728.1">
    <property type="nucleotide sequence ID" value="NC_008942.1"/>
</dbReference>
<dbReference type="SMR" id="A2ST69"/>
<dbReference type="STRING" id="410358.Mlab_1358"/>
<dbReference type="GeneID" id="4795349"/>
<dbReference type="KEGG" id="mla:Mlab_1358"/>
<dbReference type="eggNOG" id="arCOG04472">
    <property type="taxonomic scope" value="Archaea"/>
</dbReference>
<dbReference type="HOGENOM" id="CLU_076569_2_0_2"/>
<dbReference type="OrthoDB" id="11179at2157"/>
<dbReference type="UniPathway" id="UPA00071"/>
<dbReference type="Proteomes" id="UP000000365">
    <property type="component" value="Chromosome"/>
</dbReference>
<dbReference type="GO" id="GO:0005525">
    <property type="term" value="F:GTP binding"/>
    <property type="evidence" value="ECO:0007669"/>
    <property type="project" value="UniProtKB-KW"/>
</dbReference>
<dbReference type="GO" id="GO:0043814">
    <property type="term" value="F:phospholactate guanylyltransferase activity"/>
    <property type="evidence" value="ECO:0007669"/>
    <property type="project" value="UniProtKB-EC"/>
</dbReference>
<dbReference type="GO" id="GO:0052645">
    <property type="term" value="P:F420-0 metabolic process"/>
    <property type="evidence" value="ECO:0007669"/>
    <property type="project" value="UniProtKB-UniRule"/>
</dbReference>
<dbReference type="Gene3D" id="6.10.140.50">
    <property type="match status" value="1"/>
</dbReference>
<dbReference type="Gene3D" id="3.90.550.10">
    <property type="entry name" value="Spore Coat Polysaccharide Biosynthesis Protein SpsA, Chain A"/>
    <property type="match status" value="1"/>
</dbReference>
<dbReference type="HAMAP" id="MF_02114">
    <property type="entry name" value="CofC"/>
    <property type="match status" value="1"/>
</dbReference>
<dbReference type="InterPro" id="IPR002835">
    <property type="entry name" value="CofC"/>
</dbReference>
<dbReference type="InterPro" id="IPR029044">
    <property type="entry name" value="Nucleotide-diphossugar_trans"/>
</dbReference>
<dbReference type="NCBIfam" id="TIGR03552">
    <property type="entry name" value="F420_cofC"/>
    <property type="match status" value="1"/>
</dbReference>
<dbReference type="PANTHER" id="PTHR40392">
    <property type="entry name" value="2-PHOSPHO-L-LACTATE GUANYLYLTRANSFERASE"/>
    <property type="match status" value="1"/>
</dbReference>
<dbReference type="PANTHER" id="PTHR40392:SF1">
    <property type="entry name" value="2-PHOSPHO-L-LACTATE GUANYLYLTRANSFERASE"/>
    <property type="match status" value="1"/>
</dbReference>
<dbReference type="Pfam" id="PF01983">
    <property type="entry name" value="CofC"/>
    <property type="match status" value="1"/>
</dbReference>
<dbReference type="SUPFAM" id="SSF53448">
    <property type="entry name" value="Nucleotide-diphospho-sugar transferases"/>
    <property type="match status" value="1"/>
</dbReference>
<protein>
    <recommendedName>
        <fullName evidence="1">2-phospho-L-lactate guanylyltransferase</fullName>
        <shortName evidence="1">LP guanylyltransferase</shortName>
        <ecNumber evidence="1">2.7.7.68</ecNumber>
    </recommendedName>
</protein>
<name>COFC_METLZ</name>
<reference key="1">
    <citation type="journal article" date="2009" name="Stand. Genomic Sci.">
        <title>Complete genome sequence of Methanocorpusculum labreanum type strain Z.</title>
        <authorList>
            <person name="Anderson I.J."/>
            <person name="Sieprawska-Lupa M."/>
            <person name="Goltsman E."/>
            <person name="Lapidus A."/>
            <person name="Copeland A."/>
            <person name="Glavina Del Rio T."/>
            <person name="Tice H."/>
            <person name="Dalin E."/>
            <person name="Barry K."/>
            <person name="Pitluck S."/>
            <person name="Hauser L."/>
            <person name="Land M."/>
            <person name="Lucas S."/>
            <person name="Richardson P."/>
            <person name="Whitman W.B."/>
            <person name="Kyrpides N.C."/>
        </authorList>
    </citation>
    <scope>NUCLEOTIDE SEQUENCE [LARGE SCALE GENOMIC DNA]</scope>
    <source>
        <strain>ATCC 43576 / DSM 4855 / Z</strain>
    </source>
</reference>
<sequence>MYFHALIPFKPVNPKTRLSSVLSQEEREEFARIMLEDVILAVRRTGCSATLLCTSKYECRDALVAIRKEGLNEAINWALPQFHCPALIIMSDLPMVTPGSLQRVISTKADMAIVPGLGGGTNVIFVKKPEKFHVEYYGFSFRRHLQIAEELELTVEIIDSMRMSTDVDEPADLVELMIHGHGNAREWLYEHGFSLSVEDGRVKVHRDGKEVV</sequence>
<organism>
    <name type="scientific">Methanocorpusculum labreanum (strain ATCC 43576 / DSM 4855 / Z)</name>
    <dbReference type="NCBI Taxonomy" id="410358"/>
    <lineage>
        <taxon>Archaea</taxon>
        <taxon>Methanobacteriati</taxon>
        <taxon>Methanobacteriota</taxon>
        <taxon>Stenosarchaea group</taxon>
        <taxon>Methanomicrobia</taxon>
        <taxon>Methanomicrobiales</taxon>
        <taxon>Methanocorpusculaceae</taxon>
        <taxon>Methanocorpusculum</taxon>
    </lineage>
</organism>